<name>Y467_STRP1</name>
<feature type="chain" id="PRO_0000164296" description="UPF0346 protein SPy_0467/M5005_Spy0383">
    <location>
        <begin position="1"/>
        <end position="71"/>
    </location>
</feature>
<sequence>MRKSFYSWLMTQRNPKSNEPVAILADLVFDDTTFPKHTNDFELISRYLEDQASFSFNLGQFDEIWEDYLAH</sequence>
<reference key="1">
    <citation type="journal article" date="2001" name="Proc. Natl. Acad. Sci. U.S.A.">
        <title>Complete genome sequence of an M1 strain of Streptococcus pyogenes.</title>
        <authorList>
            <person name="Ferretti J.J."/>
            <person name="McShan W.M."/>
            <person name="Ajdic D.J."/>
            <person name="Savic D.J."/>
            <person name="Savic G."/>
            <person name="Lyon K."/>
            <person name="Primeaux C."/>
            <person name="Sezate S."/>
            <person name="Suvorov A.N."/>
            <person name="Kenton S."/>
            <person name="Lai H.S."/>
            <person name="Lin S.P."/>
            <person name="Qian Y."/>
            <person name="Jia H.G."/>
            <person name="Najar F.Z."/>
            <person name="Ren Q."/>
            <person name="Zhu H."/>
            <person name="Song L."/>
            <person name="White J."/>
            <person name="Yuan X."/>
            <person name="Clifton S.W."/>
            <person name="Roe B.A."/>
            <person name="McLaughlin R.E."/>
        </authorList>
    </citation>
    <scope>NUCLEOTIDE SEQUENCE [LARGE SCALE GENOMIC DNA]</scope>
    <source>
        <strain>ATCC 700294 / SF370 / Serotype M1</strain>
    </source>
</reference>
<reference key="2">
    <citation type="journal article" date="2005" name="J. Infect. Dis.">
        <title>Evolutionary origin and emergence of a highly successful clone of serotype M1 group A Streptococcus involved multiple horizontal gene transfer events.</title>
        <authorList>
            <person name="Sumby P."/>
            <person name="Porcella S.F."/>
            <person name="Madrigal A.G."/>
            <person name="Barbian K.D."/>
            <person name="Virtaneva K."/>
            <person name="Ricklefs S.M."/>
            <person name="Sturdevant D.E."/>
            <person name="Graham M.R."/>
            <person name="Vuopio-Varkila J."/>
            <person name="Hoe N.P."/>
            <person name="Musser J.M."/>
        </authorList>
    </citation>
    <scope>NUCLEOTIDE SEQUENCE [LARGE SCALE GENOMIC DNA]</scope>
    <source>
        <strain>ATCC BAA-947 / MGAS5005 / Serotype M1</strain>
    </source>
</reference>
<comment type="similarity">
    <text evidence="1">Belongs to the UPF0346 family.</text>
</comment>
<accession>Q9A148</accession>
<accession>Q490G7</accession>
<keyword id="KW-1185">Reference proteome</keyword>
<protein>
    <recommendedName>
        <fullName evidence="1">UPF0346 protein SPy_0467/M5005_Spy0383</fullName>
    </recommendedName>
</protein>
<gene>
    <name type="ordered locus">SPy_0467</name>
    <name type="ordered locus">M5005_Spy0383</name>
</gene>
<proteinExistence type="inferred from homology"/>
<organism>
    <name type="scientific">Streptococcus pyogenes serotype M1</name>
    <dbReference type="NCBI Taxonomy" id="301447"/>
    <lineage>
        <taxon>Bacteria</taxon>
        <taxon>Bacillati</taxon>
        <taxon>Bacillota</taxon>
        <taxon>Bacilli</taxon>
        <taxon>Lactobacillales</taxon>
        <taxon>Streptococcaceae</taxon>
        <taxon>Streptococcus</taxon>
    </lineage>
</organism>
<dbReference type="EMBL" id="AE004092">
    <property type="protein sequence ID" value="AAK33480.1"/>
    <property type="molecule type" value="Genomic_DNA"/>
</dbReference>
<dbReference type="EMBL" id="CP000017">
    <property type="protein sequence ID" value="AAZ51001.1"/>
    <property type="molecule type" value="Genomic_DNA"/>
</dbReference>
<dbReference type="RefSeq" id="NP_268759.1">
    <property type="nucleotide sequence ID" value="NC_002737.2"/>
</dbReference>
<dbReference type="SMR" id="Q9A148"/>
<dbReference type="PaxDb" id="1314-HKU360_00412"/>
<dbReference type="KEGG" id="spy:SPy_0467"/>
<dbReference type="KEGG" id="spz:M5005_Spy0383"/>
<dbReference type="PATRIC" id="fig|160490.10.peg.394"/>
<dbReference type="HOGENOM" id="CLU_177534_1_0_9"/>
<dbReference type="OMA" id="WLMTNRN"/>
<dbReference type="Proteomes" id="UP000000750">
    <property type="component" value="Chromosome"/>
</dbReference>
<dbReference type="Gene3D" id="1.10.150.260">
    <property type="entry name" value="YozE SAM-like"/>
    <property type="match status" value="1"/>
</dbReference>
<dbReference type="HAMAP" id="MF_01538">
    <property type="entry name" value="UPF0346"/>
    <property type="match status" value="1"/>
</dbReference>
<dbReference type="InterPro" id="IPR010673">
    <property type="entry name" value="UPF0346"/>
</dbReference>
<dbReference type="InterPro" id="IPR023089">
    <property type="entry name" value="YozE_SAM-like"/>
</dbReference>
<dbReference type="InterPro" id="IPR036806">
    <property type="entry name" value="YozE_SAM-like_sf"/>
</dbReference>
<dbReference type="NCBIfam" id="NF010193">
    <property type="entry name" value="PRK13672.1"/>
    <property type="match status" value="1"/>
</dbReference>
<dbReference type="Pfam" id="PF06855">
    <property type="entry name" value="YozE_SAM_like"/>
    <property type="match status" value="1"/>
</dbReference>
<dbReference type="PIRSF" id="PIRSF037262">
    <property type="entry name" value="UCP037262"/>
    <property type="match status" value="1"/>
</dbReference>
<dbReference type="SUPFAM" id="SSF140652">
    <property type="entry name" value="YozE-like"/>
    <property type="match status" value="1"/>
</dbReference>
<evidence type="ECO:0000255" key="1">
    <source>
        <dbReference type="HAMAP-Rule" id="MF_01538"/>
    </source>
</evidence>